<proteinExistence type="inferred from homology"/>
<gene>
    <name evidence="1" type="primary">ndhB1</name>
    <name type="ordered locus">GuabCp067</name>
</gene>
<organism>
    <name type="scientific">Guizotia abyssinica</name>
    <name type="common">Niger</name>
    <name type="synonym">Ramtilla</name>
    <dbReference type="NCBI Taxonomy" id="4230"/>
    <lineage>
        <taxon>Eukaryota</taxon>
        <taxon>Viridiplantae</taxon>
        <taxon>Streptophyta</taxon>
        <taxon>Embryophyta</taxon>
        <taxon>Tracheophyta</taxon>
        <taxon>Spermatophyta</taxon>
        <taxon>Magnoliopsida</taxon>
        <taxon>eudicotyledons</taxon>
        <taxon>Gunneridae</taxon>
        <taxon>Pentapetalae</taxon>
        <taxon>asterids</taxon>
        <taxon>campanulids</taxon>
        <taxon>Asterales</taxon>
        <taxon>Asteraceae</taxon>
        <taxon>Asteroideae</taxon>
        <taxon>Heliantheae alliance</taxon>
        <taxon>Millerieae</taxon>
        <taxon>Guizotia</taxon>
    </lineage>
</organism>
<reference key="1">
    <citation type="submission" date="2008-03" db="EMBL/GenBank/DDBJ databases">
        <title>Guizotia abyssinica chloroplast sequenced using Solexa.</title>
        <authorList>
            <person name="Kane N.C."/>
            <person name="Dempewolf H."/>
            <person name="Stewart M.L."/>
            <person name="Cronk Q."/>
            <person name="Rieseberrg L.H."/>
        </authorList>
    </citation>
    <scope>NUCLEOTIDE SEQUENCE [LARGE SCALE GENOMIC DNA]</scope>
    <source>
        <strain>cv. PI 508077</strain>
    </source>
</reference>
<sequence>MIWHVQNENFILDSTRIFMKAFHLLFFDGSLIFPECILIFGLILLLMIDSTSDQKDIPWLYFISSTSLVMSITALLFRWREEPMISFSGNFQTNNFNEIFQFLILLCSTLCIPLSVEYIECTEMAITEFLLFVLTATIGGMFLCGANDLITIFVAPECFSLCSYLLSGYTKKDVRSNEATMKYLLMGGASSSILVHGFSWLYGSSGGEIELQEIVNGLINTQMYNSPGISIALIFITVGIGFKLSPAPSHQWTPDVYEGSPTPVVAFLSVTSKVAASASATRIFDIPFYFSSNEWHLLLEILAILSMILGNLIAITQTSMKRMLAYSSIGQIGYVIIGIIVGDSNDGYASMITYMLFYISMNLGTFACIVLFGLRTGTENIRDYAGLYTKDPFLALSLALCLLSLGGLPPLAGFFGKLYLFWCGWQAGLYFLVLIGLLTSVVSIYYYLKIIKLLMTGRNQEITPHVRNYRRSPLRSNNSIELSMIVCVIASTIPGISMNPIIAIAQDTLF</sequence>
<dbReference type="EC" id="7.1.1.-" evidence="1"/>
<dbReference type="EMBL" id="EU549769">
    <property type="protein sequence ID" value="ACB86571.1"/>
    <property type="molecule type" value="Genomic_DNA"/>
</dbReference>
<dbReference type="SMR" id="P0CC68"/>
<dbReference type="GO" id="GO:0009535">
    <property type="term" value="C:chloroplast thylakoid membrane"/>
    <property type="evidence" value="ECO:0007669"/>
    <property type="project" value="UniProtKB-SubCell"/>
</dbReference>
<dbReference type="GO" id="GO:0008137">
    <property type="term" value="F:NADH dehydrogenase (ubiquinone) activity"/>
    <property type="evidence" value="ECO:0007669"/>
    <property type="project" value="InterPro"/>
</dbReference>
<dbReference type="GO" id="GO:0048038">
    <property type="term" value="F:quinone binding"/>
    <property type="evidence" value="ECO:0007669"/>
    <property type="project" value="UniProtKB-KW"/>
</dbReference>
<dbReference type="GO" id="GO:0042773">
    <property type="term" value="P:ATP synthesis coupled electron transport"/>
    <property type="evidence" value="ECO:0007669"/>
    <property type="project" value="InterPro"/>
</dbReference>
<dbReference type="GO" id="GO:0019684">
    <property type="term" value="P:photosynthesis, light reaction"/>
    <property type="evidence" value="ECO:0007669"/>
    <property type="project" value="UniProtKB-UniRule"/>
</dbReference>
<dbReference type="HAMAP" id="MF_00445">
    <property type="entry name" value="NDH1_NuoN_1"/>
    <property type="match status" value="1"/>
</dbReference>
<dbReference type="InterPro" id="IPR010096">
    <property type="entry name" value="NADH-Q_OxRdtase_suN/2"/>
</dbReference>
<dbReference type="InterPro" id="IPR001750">
    <property type="entry name" value="ND/Mrp_TM"/>
</dbReference>
<dbReference type="InterPro" id="IPR045693">
    <property type="entry name" value="Ndh2_N"/>
</dbReference>
<dbReference type="NCBIfam" id="TIGR01770">
    <property type="entry name" value="NDH_I_N"/>
    <property type="match status" value="1"/>
</dbReference>
<dbReference type="NCBIfam" id="NF002701">
    <property type="entry name" value="PRK02504.1"/>
    <property type="match status" value="1"/>
</dbReference>
<dbReference type="PANTHER" id="PTHR22773">
    <property type="entry name" value="NADH DEHYDROGENASE"/>
    <property type="match status" value="1"/>
</dbReference>
<dbReference type="Pfam" id="PF19530">
    <property type="entry name" value="Ndh2_N"/>
    <property type="match status" value="1"/>
</dbReference>
<dbReference type="Pfam" id="PF00361">
    <property type="entry name" value="Proton_antipo_M"/>
    <property type="match status" value="1"/>
</dbReference>
<dbReference type="PRINTS" id="PR01434">
    <property type="entry name" value="NADHDHGNASE5"/>
</dbReference>
<accession>P0CC68</accession>
<accession>B2LMN8</accession>
<keyword id="KW-0150">Chloroplast</keyword>
<keyword id="KW-0472">Membrane</keyword>
<keyword id="KW-0520">NAD</keyword>
<keyword id="KW-0521">NADP</keyword>
<keyword id="KW-0934">Plastid</keyword>
<keyword id="KW-0618">Plastoquinone</keyword>
<keyword id="KW-0874">Quinone</keyword>
<keyword id="KW-0793">Thylakoid</keyword>
<keyword id="KW-1278">Translocase</keyword>
<keyword id="KW-0812">Transmembrane</keyword>
<keyword id="KW-1133">Transmembrane helix</keyword>
<keyword id="KW-0813">Transport</keyword>
<evidence type="ECO:0000255" key="1">
    <source>
        <dbReference type="HAMAP-Rule" id="MF_00445"/>
    </source>
</evidence>
<name>NU2C1_GUIAB</name>
<geneLocation type="chloroplast"/>
<feature type="chain" id="PRO_0000344267" description="NAD(P)H-quinone oxidoreductase subunit 2 A, chloroplastic">
    <location>
        <begin position="1"/>
        <end position="510"/>
    </location>
</feature>
<feature type="transmembrane region" description="Helical" evidence="1">
    <location>
        <begin position="24"/>
        <end position="44"/>
    </location>
</feature>
<feature type="transmembrane region" description="Helical" evidence="1">
    <location>
        <begin position="57"/>
        <end position="77"/>
    </location>
</feature>
<feature type="transmembrane region" description="Helical" evidence="1">
    <location>
        <begin position="99"/>
        <end position="119"/>
    </location>
</feature>
<feature type="transmembrane region" description="Helical" evidence="1">
    <location>
        <begin position="124"/>
        <end position="144"/>
    </location>
</feature>
<feature type="transmembrane region" description="Helical" evidence="1">
    <location>
        <begin position="149"/>
        <end position="169"/>
    </location>
</feature>
<feature type="transmembrane region" description="Helical" evidence="1">
    <location>
        <begin position="183"/>
        <end position="203"/>
    </location>
</feature>
<feature type="transmembrane region" description="Helical" evidence="1">
    <location>
        <begin position="227"/>
        <end position="247"/>
    </location>
</feature>
<feature type="transmembrane region" description="Helical" evidence="1">
    <location>
        <begin position="295"/>
        <end position="315"/>
    </location>
</feature>
<feature type="transmembrane region" description="Helical" evidence="1">
    <location>
        <begin position="323"/>
        <end position="343"/>
    </location>
</feature>
<feature type="transmembrane region" description="Helical" evidence="1">
    <location>
        <begin position="354"/>
        <end position="374"/>
    </location>
</feature>
<feature type="transmembrane region" description="Helical" evidence="1">
    <location>
        <begin position="395"/>
        <end position="415"/>
    </location>
</feature>
<feature type="transmembrane region" description="Helical" evidence="1">
    <location>
        <begin position="418"/>
        <end position="438"/>
    </location>
</feature>
<feature type="transmembrane region" description="Helical" evidence="1">
    <location>
        <begin position="484"/>
        <end position="504"/>
    </location>
</feature>
<comment type="function">
    <text evidence="1">NDH shuttles electrons from NAD(P)H:plastoquinone, via FMN and iron-sulfur (Fe-S) centers, to quinones in the photosynthetic chain and possibly in a chloroplast respiratory chain. The immediate electron acceptor for the enzyme in this species is believed to be plastoquinone. Couples the redox reaction to proton translocation, and thus conserves the redox energy in a proton gradient.</text>
</comment>
<comment type="catalytic activity">
    <reaction evidence="1">
        <text>a plastoquinone + NADH + (n+1) H(+)(in) = a plastoquinol + NAD(+) + n H(+)(out)</text>
        <dbReference type="Rhea" id="RHEA:42608"/>
        <dbReference type="Rhea" id="RHEA-COMP:9561"/>
        <dbReference type="Rhea" id="RHEA-COMP:9562"/>
        <dbReference type="ChEBI" id="CHEBI:15378"/>
        <dbReference type="ChEBI" id="CHEBI:17757"/>
        <dbReference type="ChEBI" id="CHEBI:57540"/>
        <dbReference type="ChEBI" id="CHEBI:57945"/>
        <dbReference type="ChEBI" id="CHEBI:62192"/>
    </reaction>
</comment>
<comment type="catalytic activity">
    <reaction evidence="1">
        <text>a plastoquinone + NADPH + (n+1) H(+)(in) = a plastoquinol + NADP(+) + n H(+)(out)</text>
        <dbReference type="Rhea" id="RHEA:42612"/>
        <dbReference type="Rhea" id="RHEA-COMP:9561"/>
        <dbReference type="Rhea" id="RHEA-COMP:9562"/>
        <dbReference type="ChEBI" id="CHEBI:15378"/>
        <dbReference type="ChEBI" id="CHEBI:17757"/>
        <dbReference type="ChEBI" id="CHEBI:57783"/>
        <dbReference type="ChEBI" id="CHEBI:58349"/>
        <dbReference type="ChEBI" id="CHEBI:62192"/>
    </reaction>
</comment>
<comment type="subunit">
    <text evidence="1">NDH is composed of at least 16 different subunits, 5 of which are encoded in the nucleus.</text>
</comment>
<comment type="subcellular location">
    <subcellularLocation>
        <location evidence="1">Plastid</location>
        <location evidence="1">Chloroplast thylakoid membrane</location>
        <topology evidence="1">Multi-pass membrane protein</topology>
    </subcellularLocation>
</comment>
<comment type="similarity">
    <text evidence="1">Belongs to the complex I subunit 2 family.</text>
</comment>
<protein>
    <recommendedName>
        <fullName evidence="1">NAD(P)H-quinone oxidoreductase subunit 2 A, chloroplastic</fullName>
        <ecNumber evidence="1">7.1.1.-</ecNumber>
    </recommendedName>
    <alternativeName>
        <fullName evidence="1">NAD(P)H dehydrogenase, subunit 2 A</fullName>
    </alternativeName>
    <alternativeName>
        <fullName evidence="1">NADH-plastoquinone oxidoreductase subunit 2 A</fullName>
    </alternativeName>
</protein>